<gene>
    <name evidence="1" type="primary">hisB</name>
    <name type="ordered locus">Rleg2_3981</name>
</gene>
<protein>
    <recommendedName>
        <fullName evidence="1">Imidazoleglycerol-phosphate dehydratase</fullName>
        <shortName evidence="1">IGPD</shortName>
        <ecNumber evidence="1">4.2.1.19</ecNumber>
    </recommendedName>
</protein>
<evidence type="ECO:0000255" key="1">
    <source>
        <dbReference type="HAMAP-Rule" id="MF_00076"/>
    </source>
</evidence>
<feature type="chain" id="PRO_1000092713" description="Imidazoleglycerol-phosphate dehydratase">
    <location>
        <begin position="1"/>
        <end position="202"/>
    </location>
</feature>
<keyword id="KW-0028">Amino-acid biosynthesis</keyword>
<keyword id="KW-0963">Cytoplasm</keyword>
<keyword id="KW-0368">Histidine biosynthesis</keyword>
<keyword id="KW-0456">Lyase</keyword>
<keyword id="KW-1185">Reference proteome</keyword>
<dbReference type="EC" id="4.2.1.19" evidence="1"/>
<dbReference type="EMBL" id="CP001191">
    <property type="protein sequence ID" value="ACI57243.1"/>
    <property type="molecule type" value="Genomic_DNA"/>
</dbReference>
<dbReference type="RefSeq" id="WP_012559422.1">
    <property type="nucleotide sequence ID" value="NC_011369.1"/>
</dbReference>
<dbReference type="SMR" id="B5ZV97"/>
<dbReference type="STRING" id="395492.Rleg2_3981"/>
<dbReference type="KEGG" id="rlt:Rleg2_3981"/>
<dbReference type="eggNOG" id="COG0131">
    <property type="taxonomic scope" value="Bacteria"/>
</dbReference>
<dbReference type="HOGENOM" id="CLU_044308_3_0_5"/>
<dbReference type="UniPathway" id="UPA00031">
    <property type="reaction ID" value="UER00011"/>
</dbReference>
<dbReference type="Proteomes" id="UP000008330">
    <property type="component" value="Chromosome"/>
</dbReference>
<dbReference type="GO" id="GO:0005737">
    <property type="term" value="C:cytoplasm"/>
    <property type="evidence" value="ECO:0007669"/>
    <property type="project" value="UniProtKB-SubCell"/>
</dbReference>
<dbReference type="GO" id="GO:0004424">
    <property type="term" value="F:imidazoleglycerol-phosphate dehydratase activity"/>
    <property type="evidence" value="ECO:0007669"/>
    <property type="project" value="UniProtKB-UniRule"/>
</dbReference>
<dbReference type="GO" id="GO:0000105">
    <property type="term" value="P:L-histidine biosynthetic process"/>
    <property type="evidence" value="ECO:0007669"/>
    <property type="project" value="UniProtKB-UniRule"/>
</dbReference>
<dbReference type="CDD" id="cd07914">
    <property type="entry name" value="IGPD"/>
    <property type="match status" value="1"/>
</dbReference>
<dbReference type="FunFam" id="3.30.230.40:FF:000001">
    <property type="entry name" value="Imidazoleglycerol-phosphate dehydratase HisB"/>
    <property type="match status" value="1"/>
</dbReference>
<dbReference type="FunFam" id="3.30.230.40:FF:000003">
    <property type="entry name" value="Imidazoleglycerol-phosphate dehydratase HisB"/>
    <property type="match status" value="1"/>
</dbReference>
<dbReference type="Gene3D" id="3.30.230.40">
    <property type="entry name" value="Imidazole glycerol phosphate dehydratase, domain 1"/>
    <property type="match status" value="2"/>
</dbReference>
<dbReference type="HAMAP" id="MF_00076">
    <property type="entry name" value="HisB"/>
    <property type="match status" value="1"/>
</dbReference>
<dbReference type="InterPro" id="IPR038494">
    <property type="entry name" value="IGPD_sf"/>
</dbReference>
<dbReference type="InterPro" id="IPR000807">
    <property type="entry name" value="ImidazoleglycerolP_deHydtase"/>
</dbReference>
<dbReference type="InterPro" id="IPR020565">
    <property type="entry name" value="ImidazoleglycerP_deHydtase_CS"/>
</dbReference>
<dbReference type="InterPro" id="IPR020568">
    <property type="entry name" value="Ribosomal_Su5_D2-typ_SF"/>
</dbReference>
<dbReference type="NCBIfam" id="NF002109">
    <property type="entry name" value="PRK00951.1-5"/>
    <property type="match status" value="1"/>
</dbReference>
<dbReference type="NCBIfam" id="NF002111">
    <property type="entry name" value="PRK00951.2-1"/>
    <property type="match status" value="1"/>
</dbReference>
<dbReference type="NCBIfam" id="NF002114">
    <property type="entry name" value="PRK00951.2-4"/>
    <property type="match status" value="1"/>
</dbReference>
<dbReference type="PANTHER" id="PTHR23133:SF2">
    <property type="entry name" value="IMIDAZOLEGLYCEROL-PHOSPHATE DEHYDRATASE"/>
    <property type="match status" value="1"/>
</dbReference>
<dbReference type="PANTHER" id="PTHR23133">
    <property type="entry name" value="IMIDAZOLEGLYCEROL-PHOSPHATE DEHYDRATASE HIS7"/>
    <property type="match status" value="1"/>
</dbReference>
<dbReference type="Pfam" id="PF00475">
    <property type="entry name" value="IGPD"/>
    <property type="match status" value="1"/>
</dbReference>
<dbReference type="SUPFAM" id="SSF54211">
    <property type="entry name" value="Ribosomal protein S5 domain 2-like"/>
    <property type="match status" value="2"/>
</dbReference>
<dbReference type="PROSITE" id="PS00954">
    <property type="entry name" value="IGP_DEHYDRATASE_1"/>
    <property type="match status" value="1"/>
</dbReference>
<dbReference type="PROSITE" id="PS00955">
    <property type="entry name" value="IGP_DEHYDRATASE_2"/>
    <property type="match status" value="1"/>
</dbReference>
<comment type="catalytic activity">
    <reaction evidence="1">
        <text>D-erythro-1-(imidazol-4-yl)glycerol 3-phosphate = 3-(imidazol-4-yl)-2-oxopropyl phosphate + H2O</text>
        <dbReference type="Rhea" id="RHEA:11040"/>
        <dbReference type="ChEBI" id="CHEBI:15377"/>
        <dbReference type="ChEBI" id="CHEBI:57766"/>
        <dbReference type="ChEBI" id="CHEBI:58278"/>
        <dbReference type="EC" id="4.2.1.19"/>
    </reaction>
</comment>
<comment type="pathway">
    <text evidence="1">Amino-acid biosynthesis; L-histidine biosynthesis; L-histidine from 5-phospho-alpha-D-ribose 1-diphosphate: step 6/9.</text>
</comment>
<comment type="subcellular location">
    <subcellularLocation>
        <location evidence="1">Cytoplasm</location>
    </subcellularLocation>
</comment>
<comment type="similarity">
    <text evidence="1">Belongs to the imidazoleglycerol-phosphate dehydratase family.</text>
</comment>
<reference key="1">
    <citation type="journal article" date="2010" name="Stand. Genomic Sci.">
        <title>Complete genome sequence of Rhizobium leguminosarum bv trifolii strain WSM2304, an effective microsymbiont of the South American clover Trifolium polymorphum.</title>
        <authorList>
            <person name="Reeve W."/>
            <person name="O'Hara G."/>
            <person name="Chain P."/>
            <person name="Ardley J."/>
            <person name="Brau L."/>
            <person name="Nandesena K."/>
            <person name="Tiwari R."/>
            <person name="Malfatti S."/>
            <person name="Kiss H."/>
            <person name="Lapidus A."/>
            <person name="Copeland A."/>
            <person name="Nolan M."/>
            <person name="Land M."/>
            <person name="Ivanova N."/>
            <person name="Mavromatis K."/>
            <person name="Markowitz V."/>
            <person name="Kyrpides N."/>
            <person name="Melino V."/>
            <person name="Denton M."/>
            <person name="Yates R."/>
            <person name="Howieson J."/>
        </authorList>
    </citation>
    <scope>NUCLEOTIDE SEQUENCE [LARGE SCALE GENOMIC DNA]</scope>
    <source>
        <strain>WSM2304</strain>
    </source>
</reference>
<sequence>MAETAASRTGSVSRKTNETSISVSVNLDGTGKSKISTGVGFFDHMLDQLSRHSLIDMEIESQGDLHIDDHHTVEDTGIAIGQAISKALGDRRGITRYASIDLAMDETMTKAAVDLSGRPFLVWNVAFSAPKIGTFDTELVREFFQALAQNAGITLHILNHYGANNHHIAETCFKAVARALRTATEIDPRQVGRVPSTKGTLV</sequence>
<organism>
    <name type="scientific">Rhizobium leguminosarum bv. trifolii (strain WSM2304)</name>
    <dbReference type="NCBI Taxonomy" id="395492"/>
    <lineage>
        <taxon>Bacteria</taxon>
        <taxon>Pseudomonadati</taxon>
        <taxon>Pseudomonadota</taxon>
        <taxon>Alphaproteobacteria</taxon>
        <taxon>Hyphomicrobiales</taxon>
        <taxon>Rhizobiaceae</taxon>
        <taxon>Rhizobium/Agrobacterium group</taxon>
        <taxon>Rhizobium</taxon>
    </lineage>
</organism>
<name>HIS7_RHILW</name>
<proteinExistence type="inferred from homology"/>
<accession>B5ZV97</accession>